<protein>
    <recommendedName>
        <fullName evidence="1">Scavenger receptor class A member 5</fullName>
    </recommendedName>
    <alternativeName>
        <fullName>Scavenger receptor hlg</fullName>
    </alternativeName>
</protein>
<feature type="chain" id="PRO_0000279518" description="Scavenger receptor class A member 5">
    <location>
        <begin position="1"/>
        <end position="495"/>
    </location>
</feature>
<feature type="topological domain" description="Cytoplasmic" evidence="1">
    <location>
        <begin position="1"/>
        <end position="60"/>
    </location>
</feature>
<feature type="transmembrane region" description="Helical; Signal-anchor for type II membrane protein" evidence="1">
    <location>
        <begin position="61"/>
        <end position="81"/>
    </location>
</feature>
<feature type="topological domain" description="Extracellular" evidence="1">
    <location>
        <begin position="82"/>
        <end position="495"/>
    </location>
</feature>
<feature type="domain" description="Collagen-like" evidence="1">
    <location>
        <begin position="305"/>
        <end position="357"/>
    </location>
</feature>
<feature type="domain" description="SRCR" evidence="1">
    <location>
        <begin position="393"/>
        <end position="493"/>
    </location>
</feature>
<feature type="region of interest" description="Disordered" evidence="2">
    <location>
        <begin position="301"/>
        <end position="386"/>
    </location>
</feature>
<feature type="coiled-coil region" evidence="1">
    <location>
        <begin position="91"/>
        <end position="111"/>
    </location>
</feature>
<feature type="compositionally biased region" description="Basic and acidic residues" evidence="2">
    <location>
        <begin position="313"/>
        <end position="322"/>
    </location>
</feature>
<feature type="compositionally biased region" description="Low complexity" evidence="2">
    <location>
        <begin position="323"/>
        <end position="341"/>
    </location>
</feature>
<feature type="compositionally biased region" description="Basic and acidic residues" evidence="2">
    <location>
        <begin position="364"/>
        <end position="382"/>
    </location>
</feature>
<feature type="glycosylation site" description="N-linked (GlcNAc...) asparagine" evidence="1">
    <location>
        <position position="102"/>
    </location>
</feature>
<feature type="glycosylation site" description="N-linked (GlcNAc...) asparagine" evidence="1">
    <location>
        <position position="134"/>
    </location>
</feature>
<feature type="glycosylation site" description="N-linked (GlcNAc...) asparagine" evidence="1">
    <location>
        <position position="193"/>
    </location>
</feature>
<feature type="glycosylation site" description="N-linked (GlcNAc...) asparagine" evidence="1">
    <location>
        <position position="231"/>
    </location>
</feature>
<feature type="glycosylation site" description="N-linked (GlcNAc...) asparagine" evidence="1">
    <location>
        <position position="254"/>
    </location>
</feature>
<feature type="glycosylation site" description="N-linked (GlcNAc...) asparagine" evidence="1">
    <location>
        <position position="397"/>
    </location>
</feature>
<feature type="disulfide bond" evidence="1">
    <location>
        <begin position="418"/>
        <end position="482"/>
    </location>
</feature>
<feature type="disulfide bond" evidence="1">
    <location>
        <begin position="431"/>
        <end position="492"/>
    </location>
</feature>
<feature type="disulfide bond" evidence="1">
    <location>
        <begin position="462"/>
        <end position="472"/>
    </location>
</feature>
<feature type="splice variant" id="VSP_023472" description="In isoform 3." evidence="6">
    <location>
        <begin position="38"/>
        <end position="80"/>
    </location>
</feature>
<feature type="splice variant" id="VSP_023473" description="In isoform 4." evidence="4">
    <location>
        <begin position="81"/>
        <end position="305"/>
    </location>
</feature>
<feature type="splice variant" id="VSP_023474" description="In isoform 2 and isoform 3." evidence="5 6">
    <original>GVEAPMMIRLVNGSG</original>
    <variation>KDILLGPWDMVLAQG</variation>
    <location>
        <begin position="386"/>
        <end position="400"/>
    </location>
</feature>
<feature type="splice variant" id="VSP_023475" description="In isoform 2 and isoform 3." evidence="5 6">
    <location>
        <begin position="401"/>
        <end position="495"/>
    </location>
</feature>
<feature type="sequence variant" id="VAR_052062" description="In dbSNP:rs17058374.">
    <original>A</original>
    <variation>T</variation>
    <location>
        <position position="45"/>
    </location>
</feature>
<feature type="sequence variant" id="VAR_030915" description="In dbSNP:rs17058207." evidence="3">
    <original>D</original>
    <variation>H</variation>
    <location>
        <position position="316"/>
    </location>
</feature>
<feature type="sequence conflict" description="In Ref. 3; AAQ17470." evidence="7" ref="3">
    <original>A</original>
    <variation>S</variation>
    <location>
        <position position="93"/>
    </location>
</feature>
<feature type="sequence conflict" description="In Ref. 3; AAQ17470." evidence="7" ref="3">
    <original>T</original>
    <variation>A</variation>
    <location>
        <position position="95"/>
    </location>
</feature>
<feature type="sequence conflict" description="In Ref. 3; AAQ17470." evidence="7" ref="3">
    <original>L</original>
    <variation>S</variation>
    <location>
        <position position="108"/>
    </location>
</feature>
<feature type="sequence conflict" description="In Ref. 3; AAQ17470." evidence="7" ref="3">
    <original>Q</original>
    <variation>R</variation>
    <location>
        <position position="246"/>
    </location>
</feature>
<feature type="sequence conflict" description="In Ref. 3; AAQ17470." evidence="7" ref="3">
    <original>K</original>
    <variation>E</variation>
    <location>
        <position position="377"/>
    </location>
</feature>
<feature type="strand" evidence="8">
    <location>
        <begin position="393"/>
        <end position="400"/>
    </location>
</feature>
<feature type="strand" evidence="8">
    <location>
        <begin position="403"/>
        <end position="410"/>
    </location>
</feature>
<feature type="strand" evidence="8">
    <location>
        <begin position="413"/>
        <end position="418"/>
    </location>
</feature>
<feature type="helix" evidence="8">
    <location>
        <begin position="424"/>
        <end position="433"/>
    </location>
</feature>
<feature type="strand" evidence="8">
    <location>
        <begin position="437"/>
        <end position="443"/>
    </location>
</feature>
<feature type="strand" evidence="8">
    <location>
        <begin position="455"/>
        <end position="457"/>
    </location>
</feature>
<feature type="helix" evidence="8">
    <location>
        <begin position="469"/>
        <end position="471"/>
    </location>
</feature>
<feature type="helix" evidence="8">
    <location>
        <begin position="484"/>
        <end position="486"/>
    </location>
</feature>
<feature type="strand" evidence="8">
    <location>
        <begin position="489"/>
        <end position="493"/>
    </location>
</feature>
<name>SCAR5_HUMAN</name>
<reference key="1">
    <citation type="journal article" date="2003" name="Genome Res.">
        <title>The secreted protein discovery initiative (SPDI), a large-scale effort to identify novel human secreted and transmembrane proteins: a bioinformatics assessment.</title>
        <authorList>
            <person name="Clark H.F."/>
            <person name="Gurney A.L."/>
            <person name="Abaya E."/>
            <person name="Baker K."/>
            <person name="Baldwin D.T."/>
            <person name="Brush J."/>
            <person name="Chen J."/>
            <person name="Chow B."/>
            <person name="Chui C."/>
            <person name="Crowley C."/>
            <person name="Currell B."/>
            <person name="Deuel B."/>
            <person name="Dowd P."/>
            <person name="Eaton D."/>
            <person name="Foster J.S."/>
            <person name="Grimaldi C."/>
            <person name="Gu Q."/>
            <person name="Hass P.E."/>
            <person name="Heldens S."/>
            <person name="Huang A."/>
            <person name="Kim H.S."/>
            <person name="Klimowski L."/>
            <person name="Jin Y."/>
            <person name="Johnson S."/>
            <person name="Lee J."/>
            <person name="Lewis L."/>
            <person name="Liao D."/>
            <person name="Mark M.R."/>
            <person name="Robbie E."/>
            <person name="Sanchez C."/>
            <person name="Schoenfeld J."/>
            <person name="Seshagiri S."/>
            <person name="Simmons L."/>
            <person name="Singh J."/>
            <person name="Smith V."/>
            <person name="Stinson J."/>
            <person name="Vagts A."/>
            <person name="Vandlen R.L."/>
            <person name="Watanabe C."/>
            <person name="Wieand D."/>
            <person name="Woods K."/>
            <person name="Xie M.-H."/>
            <person name="Yansura D.G."/>
            <person name="Yi S."/>
            <person name="Yu G."/>
            <person name="Yuan J."/>
            <person name="Zhang M."/>
            <person name="Zhang Z."/>
            <person name="Goddard A.D."/>
            <person name="Wood W.I."/>
            <person name="Godowski P.J."/>
            <person name="Gray A.M."/>
        </authorList>
    </citation>
    <scope>NUCLEOTIDE SEQUENCE [LARGE SCALE MRNA] (ISOFORM 4)</scope>
</reference>
<reference key="2">
    <citation type="journal article" date="2004" name="Nat. Genet.">
        <title>Complete sequencing and characterization of 21,243 full-length human cDNAs.</title>
        <authorList>
            <person name="Ota T."/>
            <person name="Suzuki Y."/>
            <person name="Nishikawa T."/>
            <person name="Otsuki T."/>
            <person name="Sugiyama T."/>
            <person name="Irie R."/>
            <person name="Wakamatsu A."/>
            <person name="Hayashi K."/>
            <person name="Sato H."/>
            <person name="Nagai K."/>
            <person name="Kimura K."/>
            <person name="Makita H."/>
            <person name="Sekine M."/>
            <person name="Obayashi M."/>
            <person name="Nishi T."/>
            <person name="Shibahara T."/>
            <person name="Tanaka T."/>
            <person name="Ishii S."/>
            <person name="Yamamoto J."/>
            <person name="Saito K."/>
            <person name="Kawai Y."/>
            <person name="Isono Y."/>
            <person name="Nakamura Y."/>
            <person name="Nagahari K."/>
            <person name="Murakami K."/>
            <person name="Yasuda T."/>
            <person name="Iwayanagi T."/>
            <person name="Wagatsuma M."/>
            <person name="Shiratori A."/>
            <person name="Sudo H."/>
            <person name="Hosoiri T."/>
            <person name="Kaku Y."/>
            <person name="Kodaira H."/>
            <person name="Kondo H."/>
            <person name="Sugawara M."/>
            <person name="Takahashi M."/>
            <person name="Kanda K."/>
            <person name="Yokoi T."/>
            <person name="Furuya T."/>
            <person name="Kikkawa E."/>
            <person name="Omura Y."/>
            <person name="Abe K."/>
            <person name="Kamihara K."/>
            <person name="Katsuta N."/>
            <person name="Sato K."/>
            <person name="Tanikawa M."/>
            <person name="Yamazaki M."/>
            <person name="Ninomiya K."/>
            <person name="Ishibashi T."/>
            <person name="Yamashita H."/>
            <person name="Murakawa K."/>
            <person name="Fujimori K."/>
            <person name="Tanai H."/>
            <person name="Kimata M."/>
            <person name="Watanabe M."/>
            <person name="Hiraoka S."/>
            <person name="Chiba Y."/>
            <person name="Ishida S."/>
            <person name="Ono Y."/>
            <person name="Takiguchi S."/>
            <person name="Watanabe S."/>
            <person name="Yosida M."/>
            <person name="Hotuta T."/>
            <person name="Kusano J."/>
            <person name="Kanehori K."/>
            <person name="Takahashi-Fujii A."/>
            <person name="Hara H."/>
            <person name="Tanase T.-O."/>
            <person name="Nomura Y."/>
            <person name="Togiya S."/>
            <person name="Komai F."/>
            <person name="Hara R."/>
            <person name="Takeuchi K."/>
            <person name="Arita M."/>
            <person name="Imose N."/>
            <person name="Musashino K."/>
            <person name="Yuuki H."/>
            <person name="Oshima A."/>
            <person name="Sasaki N."/>
            <person name="Aotsuka S."/>
            <person name="Yoshikawa Y."/>
            <person name="Matsunawa H."/>
            <person name="Ichihara T."/>
            <person name="Shiohata N."/>
            <person name="Sano S."/>
            <person name="Moriya S."/>
            <person name="Momiyama H."/>
            <person name="Satoh N."/>
            <person name="Takami S."/>
            <person name="Terashima Y."/>
            <person name="Suzuki O."/>
            <person name="Nakagawa S."/>
            <person name="Senoh A."/>
            <person name="Mizoguchi H."/>
            <person name="Goto Y."/>
            <person name="Shimizu F."/>
            <person name="Wakebe H."/>
            <person name="Hishigaki H."/>
            <person name="Watanabe T."/>
            <person name="Sugiyama A."/>
            <person name="Takemoto M."/>
            <person name="Kawakami B."/>
            <person name="Yamazaki M."/>
            <person name="Watanabe K."/>
            <person name="Kumagai A."/>
            <person name="Itakura S."/>
            <person name="Fukuzumi Y."/>
            <person name="Fujimori Y."/>
            <person name="Komiyama M."/>
            <person name="Tashiro H."/>
            <person name="Tanigami A."/>
            <person name="Fujiwara T."/>
            <person name="Ono T."/>
            <person name="Yamada K."/>
            <person name="Fujii Y."/>
            <person name="Ozaki K."/>
            <person name="Hirao M."/>
            <person name="Ohmori Y."/>
            <person name="Kawabata A."/>
            <person name="Hikiji T."/>
            <person name="Kobatake N."/>
            <person name="Inagaki H."/>
            <person name="Ikema Y."/>
            <person name="Okamoto S."/>
            <person name="Okitani R."/>
            <person name="Kawakami T."/>
            <person name="Noguchi S."/>
            <person name="Itoh T."/>
            <person name="Shigeta K."/>
            <person name="Senba T."/>
            <person name="Matsumura K."/>
            <person name="Nakajima Y."/>
            <person name="Mizuno T."/>
            <person name="Morinaga M."/>
            <person name="Sasaki M."/>
            <person name="Togashi T."/>
            <person name="Oyama M."/>
            <person name="Hata H."/>
            <person name="Watanabe M."/>
            <person name="Komatsu T."/>
            <person name="Mizushima-Sugano J."/>
            <person name="Satoh T."/>
            <person name="Shirai Y."/>
            <person name="Takahashi Y."/>
            <person name="Nakagawa K."/>
            <person name="Okumura K."/>
            <person name="Nagase T."/>
            <person name="Nomura N."/>
            <person name="Kikuchi H."/>
            <person name="Masuho Y."/>
            <person name="Yamashita R."/>
            <person name="Nakai K."/>
            <person name="Yada T."/>
            <person name="Nakamura Y."/>
            <person name="Ohara O."/>
            <person name="Isogai T."/>
            <person name="Sugano S."/>
        </authorList>
    </citation>
    <scope>NUCLEOTIDE SEQUENCE [LARGE SCALE MRNA] (ISOFORM 1)</scope>
    <source>
        <tissue>Adipose tissue</tissue>
    </source>
</reference>
<reference key="3">
    <citation type="submission" date="2003-07" db="EMBL/GenBank/DDBJ databases">
        <authorList>
            <person name="Lin L."/>
            <person name="Yu R."/>
            <person name="Zheng G."/>
            <person name="Li H."/>
            <person name="Zhou G."/>
            <person name="Shen C."/>
            <person name="Ke R."/>
            <person name="Zhong G."/>
            <person name="Xiao W."/>
            <person name="Li M."/>
            <person name="Yang S."/>
        </authorList>
    </citation>
    <scope>NUCLEOTIDE SEQUENCE [LARGE SCALE MRNA] (ISOFORM 3)</scope>
    <scope>VARIANT HIS-316</scope>
</reference>
<reference key="4">
    <citation type="journal article" date="2004" name="Genome Res.">
        <title>The status, quality, and expansion of the NIH full-length cDNA project: the Mammalian Gene Collection (MGC).</title>
        <authorList>
            <consortium name="The MGC Project Team"/>
        </authorList>
    </citation>
    <scope>NUCLEOTIDE SEQUENCE [LARGE SCALE MRNA] (ISOFORM 2)</scope>
    <source>
        <tissue>Muscle</tissue>
    </source>
</reference>
<sequence>MENKAMYLHTVSDCDTSSICEDSFDGRSLSKLNLCEDGPCHKRRASICCTQLGSLSALKHAVLGLYLLVFLILVGIFILAVSRPRSSPDDLKALTRNVNRLNESFRDLQLRLLQAPLQADLTEQVWKVQDALQNQSDSLLALAGAVQRLEGALWGLQAQAVQTEQAVALLRDRTGQQSDTAQLELYQLQVESNSSQLLLRRHAGLLDGLARRVGILGEELADVGGVLRGLNHSLSYDVALHRTRLQDLRVLVSNASEDTRRLRLAHVGMELQLKQELAMLNAVTEDLRLKDWEHSIALRNISLAKGPPGPKGDQGDEGKEGRPGIPGLPGLRGLPGERGTPGLPGPKGDDGKLGATGPMGMRGFKGDRGPKGEKGEKGDRAGDASGVEAPMMIRLVNGSGPHEGRVEVYHDRRWGTVCDDGWDKKDGDVVCRMLGFRGVEEVYRTARFGQGTGRIWMDDVACKGTEETIFRCSFSKWGVTNCGHAEDASVTCNRH</sequence>
<dbReference type="EMBL" id="AY358150">
    <property type="protein sequence ID" value="AAQ88517.1"/>
    <property type="molecule type" value="mRNA"/>
</dbReference>
<dbReference type="EMBL" id="AK172746">
    <property type="protein sequence ID" value="BAD18733.1"/>
    <property type="molecule type" value="mRNA"/>
</dbReference>
<dbReference type="EMBL" id="AY337579">
    <property type="protein sequence ID" value="AAQ17470.1"/>
    <property type="molecule type" value="mRNA"/>
</dbReference>
<dbReference type="EMBL" id="BC033153">
    <property type="protein sequence ID" value="AAH33153.1"/>
    <property type="molecule type" value="mRNA"/>
</dbReference>
<dbReference type="CCDS" id="CCDS6064.1">
    <molecule id="Q6ZMJ2-1"/>
</dbReference>
<dbReference type="RefSeq" id="NP_001400131.1">
    <molecule id="Q6ZMJ2-2"/>
    <property type="nucleotide sequence ID" value="NM_001413202.1"/>
</dbReference>
<dbReference type="RefSeq" id="NP_776194.2">
    <molecule id="Q6ZMJ2-1"/>
    <property type="nucleotide sequence ID" value="NM_173833.5"/>
</dbReference>
<dbReference type="PDB" id="7C00">
    <property type="method" value="X-ray"/>
    <property type="resolution" value="1.70 A"/>
    <property type="chains" value="A=392-495"/>
</dbReference>
<dbReference type="PDBsum" id="7C00"/>
<dbReference type="SMR" id="Q6ZMJ2"/>
<dbReference type="BioGRID" id="130309">
    <property type="interactions" value="25"/>
</dbReference>
<dbReference type="FunCoup" id="Q6ZMJ2">
    <property type="interactions" value="752"/>
</dbReference>
<dbReference type="IntAct" id="Q6ZMJ2">
    <property type="interactions" value="20"/>
</dbReference>
<dbReference type="STRING" id="9606.ENSP00000346990"/>
<dbReference type="GlyCosmos" id="Q6ZMJ2">
    <property type="glycosylation" value="6 sites, No reported glycans"/>
</dbReference>
<dbReference type="GlyGen" id="Q6ZMJ2">
    <property type="glycosylation" value="7 sites, 3 N-linked glycans (4 sites)"/>
</dbReference>
<dbReference type="iPTMnet" id="Q6ZMJ2"/>
<dbReference type="PhosphoSitePlus" id="Q6ZMJ2"/>
<dbReference type="SwissPalm" id="Q6ZMJ2"/>
<dbReference type="BioMuta" id="SCARA5"/>
<dbReference type="DMDM" id="74749535"/>
<dbReference type="jPOST" id="Q6ZMJ2"/>
<dbReference type="MassIVE" id="Q6ZMJ2"/>
<dbReference type="PaxDb" id="9606-ENSP00000346990"/>
<dbReference type="PeptideAtlas" id="Q6ZMJ2"/>
<dbReference type="ProteomicsDB" id="67878">
    <molecule id="Q6ZMJ2-1"/>
</dbReference>
<dbReference type="ProteomicsDB" id="67879">
    <molecule id="Q6ZMJ2-2"/>
</dbReference>
<dbReference type="ProteomicsDB" id="67880">
    <molecule id="Q6ZMJ2-3"/>
</dbReference>
<dbReference type="ProteomicsDB" id="67881">
    <molecule id="Q6ZMJ2-4"/>
</dbReference>
<dbReference type="Antibodypedia" id="10358">
    <property type="antibodies" value="186 antibodies from 29 providers"/>
</dbReference>
<dbReference type="DNASU" id="286133"/>
<dbReference type="Ensembl" id="ENST00000354914.8">
    <molecule id="Q6ZMJ2-1"/>
    <property type="protein sequence ID" value="ENSP00000346990.3"/>
    <property type="gene ID" value="ENSG00000168079.17"/>
</dbReference>
<dbReference type="Ensembl" id="ENST00000380385.6">
    <molecule id="Q6ZMJ2-4"/>
    <property type="protein sequence ID" value="ENSP00000369746.2"/>
    <property type="gene ID" value="ENSG00000168079.17"/>
</dbReference>
<dbReference type="Ensembl" id="ENST00000518030.1">
    <molecule id="Q6ZMJ2-3"/>
    <property type="protein sequence ID" value="ENSP00000430713.1"/>
    <property type="gene ID" value="ENSG00000168079.17"/>
</dbReference>
<dbReference type="Ensembl" id="ENST00000524352.5">
    <molecule id="Q6ZMJ2-2"/>
    <property type="protein sequence ID" value="ENSP00000428663.1"/>
    <property type="gene ID" value="ENSG00000168079.17"/>
</dbReference>
<dbReference type="GeneID" id="286133"/>
<dbReference type="KEGG" id="hsa:286133"/>
<dbReference type="MANE-Select" id="ENST00000354914.8">
    <property type="protein sequence ID" value="ENSP00000346990.3"/>
    <property type="RefSeq nucleotide sequence ID" value="NM_173833.6"/>
    <property type="RefSeq protein sequence ID" value="NP_776194.2"/>
</dbReference>
<dbReference type="UCSC" id="uc003xgj.4">
    <molecule id="Q6ZMJ2-1"/>
    <property type="organism name" value="human"/>
</dbReference>
<dbReference type="AGR" id="HGNC:28701"/>
<dbReference type="CTD" id="286133"/>
<dbReference type="DisGeNET" id="286133"/>
<dbReference type="GeneCards" id="SCARA5"/>
<dbReference type="HGNC" id="HGNC:28701">
    <property type="gene designation" value="SCARA5"/>
</dbReference>
<dbReference type="HPA" id="ENSG00000168079">
    <property type="expression patterns" value="Tissue enhanced (heart)"/>
</dbReference>
<dbReference type="MIM" id="611306">
    <property type="type" value="gene"/>
</dbReference>
<dbReference type="neXtProt" id="NX_Q6ZMJ2"/>
<dbReference type="OpenTargets" id="ENSG00000168079"/>
<dbReference type="PharmGKB" id="PA142670948"/>
<dbReference type="VEuPathDB" id="HostDB:ENSG00000168079"/>
<dbReference type="eggNOG" id="ENOG502QSM1">
    <property type="taxonomic scope" value="Eukaryota"/>
</dbReference>
<dbReference type="GeneTree" id="ENSGT00950000183074"/>
<dbReference type="HOGENOM" id="CLU_041152_1_0_1"/>
<dbReference type="InParanoid" id="Q6ZMJ2"/>
<dbReference type="OMA" id="LCDEVST"/>
<dbReference type="OrthoDB" id="536948at2759"/>
<dbReference type="PAN-GO" id="Q6ZMJ2">
    <property type="GO annotations" value="1 GO annotation based on evolutionary models"/>
</dbReference>
<dbReference type="PhylomeDB" id="Q6ZMJ2"/>
<dbReference type="TreeFam" id="TF330855"/>
<dbReference type="PathwayCommons" id="Q6ZMJ2"/>
<dbReference type="Reactome" id="R-HSA-3000480">
    <property type="pathway name" value="Scavenging by Class A Receptors"/>
</dbReference>
<dbReference type="SignaLink" id="Q6ZMJ2"/>
<dbReference type="BioGRID-ORCS" id="286133">
    <property type="hits" value="10 hits in 1154 CRISPR screens"/>
</dbReference>
<dbReference type="ChiTaRS" id="SCARA5">
    <property type="organism name" value="human"/>
</dbReference>
<dbReference type="GenomeRNAi" id="286133"/>
<dbReference type="Pharos" id="Q6ZMJ2">
    <property type="development level" value="Tbio"/>
</dbReference>
<dbReference type="PRO" id="PR:Q6ZMJ2"/>
<dbReference type="Proteomes" id="UP000005640">
    <property type="component" value="Chromosome 8"/>
</dbReference>
<dbReference type="RNAct" id="Q6ZMJ2">
    <property type="molecule type" value="protein"/>
</dbReference>
<dbReference type="Bgee" id="ENSG00000168079">
    <property type="expression patterns" value="Expressed in decidua and 160 other cell types or tissues"/>
</dbReference>
<dbReference type="GO" id="GO:0009986">
    <property type="term" value="C:cell surface"/>
    <property type="evidence" value="ECO:0007669"/>
    <property type="project" value="Ensembl"/>
</dbReference>
<dbReference type="GO" id="GO:0005886">
    <property type="term" value="C:plasma membrane"/>
    <property type="evidence" value="ECO:0000250"/>
    <property type="project" value="UniProtKB"/>
</dbReference>
<dbReference type="GO" id="GO:0070287">
    <property type="term" value="F:ferritin receptor activity"/>
    <property type="evidence" value="ECO:0000250"/>
    <property type="project" value="UniProtKB"/>
</dbReference>
<dbReference type="GO" id="GO:0034605">
    <property type="term" value="P:cellular response to heat"/>
    <property type="evidence" value="ECO:0007669"/>
    <property type="project" value="Ensembl"/>
</dbReference>
<dbReference type="GO" id="GO:0006897">
    <property type="term" value="P:endocytosis"/>
    <property type="evidence" value="ECO:0000250"/>
    <property type="project" value="UniProtKB"/>
</dbReference>
<dbReference type="GO" id="GO:0006879">
    <property type="term" value="P:intracellular iron ion homeostasis"/>
    <property type="evidence" value="ECO:0000250"/>
    <property type="project" value="UniProtKB"/>
</dbReference>
<dbReference type="GO" id="GO:0034755">
    <property type="term" value="P:iron ion transmembrane transport"/>
    <property type="evidence" value="ECO:0000250"/>
    <property type="project" value="UniProtKB"/>
</dbReference>
<dbReference type="GO" id="GO:0070207">
    <property type="term" value="P:protein homotrimerization"/>
    <property type="evidence" value="ECO:0000250"/>
    <property type="project" value="UniProtKB"/>
</dbReference>
<dbReference type="FunFam" id="3.10.250.10:FF:000011">
    <property type="entry name" value="Scavenger receptor class A member 5"/>
    <property type="match status" value="1"/>
</dbReference>
<dbReference type="Gene3D" id="3.10.250.10">
    <property type="entry name" value="SRCR-like domain"/>
    <property type="match status" value="1"/>
</dbReference>
<dbReference type="HAMAP" id="MF_03070">
    <property type="entry name" value="SCARA5"/>
    <property type="match status" value="1"/>
</dbReference>
<dbReference type="InterPro" id="IPR008160">
    <property type="entry name" value="Collagen"/>
</dbReference>
<dbReference type="InterPro" id="IPR034726">
    <property type="entry name" value="SCARA5"/>
</dbReference>
<dbReference type="InterPro" id="IPR001190">
    <property type="entry name" value="SRCR"/>
</dbReference>
<dbReference type="InterPro" id="IPR036772">
    <property type="entry name" value="SRCR-like_dom_sf"/>
</dbReference>
<dbReference type="PANTHER" id="PTHR48071:SF24">
    <property type="entry name" value="DELETED IN MALIGNANT BRAIN TUMORS 1 PROTEIN-LIKE"/>
    <property type="match status" value="1"/>
</dbReference>
<dbReference type="PANTHER" id="PTHR48071">
    <property type="entry name" value="SRCR DOMAIN-CONTAINING PROTEIN"/>
    <property type="match status" value="1"/>
</dbReference>
<dbReference type="Pfam" id="PF01391">
    <property type="entry name" value="Collagen"/>
    <property type="match status" value="2"/>
</dbReference>
<dbReference type="Pfam" id="PF00530">
    <property type="entry name" value="SRCR"/>
    <property type="match status" value="1"/>
</dbReference>
<dbReference type="PRINTS" id="PR00258">
    <property type="entry name" value="SPERACTRCPTR"/>
</dbReference>
<dbReference type="SMART" id="SM00202">
    <property type="entry name" value="SR"/>
    <property type="match status" value="1"/>
</dbReference>
<dbReference type="SUPFAM" id="SSF56487">
    <property type="entry name" value="SRCR-like"/>
    <property type="match status" value="1"/>
</dbReference>
<dbReference type="PROSITE" id="PS00420">
    <property type="entry name" value="SRCR_1"/>
    <property type="match status" value="1"/>
</dbReference>
<dbReference type="PROSITE" id="PS50287">
    <property type="entry name" value="SRCR_2"/>
    <property type="match status" value="1"/>
</dbReference>
<keyword id="KW-0002">3D-structure</keyword>
<keyword id="KW-0025">Alternative splicing</keyword>
<keyword id="KW-1003">Cell membrane</keyword>
<keyword id="KW-0175">Coiled coil</keyword>
<keyword id="KW-1015">Disulfide bond</keyword>
<keyword id="KW-0325">Glycoprotein</keyword>
<keyword id="KW-0406">Ion transport</keyword>
<keyword id="KW-0408">Iron</keyword>
<keyword id="KW-0410">Iron transport</keyword>
<keyword id="KW-0472">Membrane</keyword>
<keyword id="KW-1267">Proteomics identification</keyword>
<keyword id="KW-0675">Receptor</keyword>
<keyword id="KW-1185">Reference proteome</keyword>
<keyword id="KW-0735">Signal-anchor</keyword>
<keyword id="KW-0812">Transmembrane</keyword>
<keyword id="KW-1133">Transmembrane helix</keyword>
<keyword id="KW-0813">Transport</keyword>
<proteinExistence type="evidence at protein level"/>
<accession>Q6ZMJ2</accession>
<accession>Q6UXZ1</accession>
<accession>Q7Z4A1</accession>
<accession>Q8N4Z7</accession>
<gene>
    <name evidence="1" type="primary">SCARA5</name>
    <name type="ORF">UNQ2938/PRO28700</name>
</gene>
<evidence type="ECO:0000255" key="1">
    <source>
        <dbReference type="HAMAP-Rule" id="MF_03070"/>
    </source>
</evidence>
<evidence type="ECO:0000256" key="2">
    <source>
        <dbReference type="SAM" id="MobiDB-lite"/>
    </source>
</evidence>
<evidence type="ECO:0000269" key="3">
    <source ref="3"/>
</evidence>
<evidence type="ECO:0000303" key="4">
    <source>
    </source>
</evidence>
<evidence type="ECO:0000303" key="5">
    <source>
    </source>
</evidence>
<evidence type="ECO:0000303" key="6">
    <source ref="3"/>
</evidence>
<evidence type="ECO:0000305" key="7"/>
<evidence type="ECO:0007829" key="8">
    <source>
        <dbReference type="PDB" id="7C00"/>
    </source>
</evidence>
<organism>
    <name type="scientific">Homo sapiens</name>
    <name type="common">Human</name>
    <dbReference type="NCBI Taxonomy" id="9606"/>
    <lineage>
        <taxon>Eukaryota</taxon>
        <taxon>Metazoa</taxon>
        <taxon>Chordata</taxon>
        <taxon>Craniata</taxon>
        <taxon>Vertebrata</taxon>
        <taxon>Euteleostomi</taxon>
        <taxon>Mammalia</taxon>
        <taxon>Eutheria</taxon>
        <taxon>Euarchontoglires</taxon>
        <taxon>Primates</taxon>
        <taxon>Haplorrhini</taxon>
        <taxon>Catarrhini</taxon>
        <taxon>Hominidae</taxon>
        <taxon>Homo</taxon>
    </lineage>
</organism>
<comment type="function">
    <text evidence="1">Ferritin receptor that mediates non-transferrin-dependent delivery of iron. Mediates cellular uptake of ferritin-bound iron by stimulating ferritin endocytosis from the cell surface with consequent iron delivery within the cell. Delivery of iron to cells by ferritin is required for the development of specific cell types, suggesting the existence of cell type-specific mechanisms of iron traffic in organogenesis, which alternatively utilize transferrin or non-transferrin iron delivery pathways. Ferritin mediates iron uptake in capsule cells of the developing kidney. Preferentially binds ferritin light chain (FTL) compared to heavy chain (FTH1).</text>
</comment>
<comment type="subunit">
    <text evidence="1">Homotrimer.</text>
</comment>
<comment type="interaction">
    <interactant intactId="EBI-12823227">
        <id>Q6ZMJ2-2</id>
    </interactant>
    <interactant intactId="EBI-12062109">
        <id>Q86Z23</id>
        <label>C1QL4</label>
    </interactant>
    <organismsDiffer>false</organismsDiffer>
    <experiments>3</experiments>
</comment>
<comment type="interaction">
    <interactant intactId="EBI-12823227">
        <id>Q6ZMJ2-2</id>
    </interactant>
    <interactant intactId="EBI-11522780">
        <id>Q96DZ9-2</id>
        <label>CMTM5</label>
    </interactant>
    <organismsDiffer>false</organismsDiffer>
    <experiments>3</experiments>
</comment>
<comment type="interaction">
    <interactant intactId="EBI-12823227">
        <id>Q6ZMJ2-2</id>
    </interactant>
    <interactant intactId="EBI-2339219">
        <id>Q08426</id>
        <label>EHHADH</label>
    </interactant>
    <organismsDiffer>false</organismsDiffer>
    <experiments>3</experiments>
</comment>
<comment type="interaction">
    <interactant intactId="EBI-12823227">
        <id>Q6ZMJ2-2</id>
    </interactant>
    <interactant intactId="EBI-742102">
        <id>Q8IYI6</id>
        <label>EXOC8</label>
    </interactant>
    <organismsDiffer>false</organismsDiffer>
    <experiments>3</experiments>
</comment>
<comment type="interaction">
    <interactant intactId="EBI-12823227">
        <id>Q6ZMJ2-2</id>
    </interactant>
    <interactant intactId="EBI-2556193">
        <id>Q63ZY3</id>
        <label>KANK2</label>
    </interactant>
    <organismsDiffer>false</organismsDiffer>
    <experiments>3</experiments>
</comment>
<comment type="interaction">
    <interactant intactId="EBI-12823227">
        <id>Q6ZMJ2-2</id>
    </interactant>
    <interactant intactId="EBI-741158">
        <id>Q96HA8</id>
        <label>NTAQ1</label>
    </interactant>
    <organismsDiffer>false</organismsDiffer>
    <experiments>3</experiments>
</comment>
<comment type="interaction">
    <interactant intactId="EBI-12823227">
        <id>Q6ZMJ2-2</id>
    </interactant>
    <interactant intactId="EBI-10181968">
        <id>Q7Z4N8</id>
        <label>P4HA3</label>
    </interactant>
    <organismsDiffer>false</organismsDiffer>
    <experiments>3</experiments>
</comment>
<comment type="interaction">
    <interactant intactId="EBI-12823227">
        <id>Q6ZMJ2-2</id>
    </interactant>
    <interactant intactId="EBI-372273">
        <id>P20618</id>
        <label>PSMB1</label>
    </interactant>
    <organismsDiffer>false</organismsDiffer>
    <experiments>3</experiments>
</comment>
<comment type="interaction">
    <interactant intactId="EBI-12823227">
        <id>Q6ZMJ2-2</id>
    </interactant>
    <interactant intactId="EBI-12002474">
        <id>Q2KHN1</id>
        <label>RNF151</label>
    </interactant>
    <organismsDiffer>false</organismsDiffer>
    <experiments>3</experiments>
</comment>
<comment type="interaction">
    <interactant intactId="EBI-12823227">
        <id>Q6ZMJ2-2</id>
    </interactant>
    <interactant intactId="EBI-10281213">
        <id>Q969S0</id>
        <label>SLC35B4</label>
    </interactant>
    <organismsDiffer>false</organismsDiffer>
    <experiments>3</experiments>
</comment>
<comment type="interaction">
    <interactant intactId="EBI-12823227">
        <id>Q6ZMJ2-2</id>
    </interactant>
    <interactant intactId="EBI-358489">
        <id>Q96GM5</id>
        <label>SMARCD1</label>
    </interactant>
    <organismsDiffer>false</organismsDiffer>
    <experiments>3</experiments>
</comment>
<comment type="interaction">
    <interactant intactId="EBI-12823227">
        <id>Q6ZMJ2-2</id>
    </interactant>
    <interactant intactId="EBI-12876824">
        <id>Q9BTX3</id>
        <label>TMEM208</label>
    </interactant>
    <organismsDiffer>false</organismsDiffer>
    <experiments>3</experiments>
</comment>
<comment type="interaction">
    <interactant intactId="EBI-12823227">
        <id>Q6ZMJ2-2</id>
    </interactant>
    <interactant intactId="EBI-346882">
        <id>Q99816</id>
        <label>TSG101</label>
    </interactant>
    <organismsDiffer>false</organismsDiffer>
    <experiments>3</experiments>
</comment>
<comment type="interaction">
    <interactant intactId="EBI-12823227">
        <id>Q6ZMJ2-2</id>
    </interactant>
    <interactant intactId="EBI-712969">
        <id>Q9Y3C0</id>
        <label>WASHC3</label>
    </interactant>
    <organismsDiffer>false</organismsDiffer>
    <experiments>3</experiments>
</comment>
<comment type="subcellular location">
    <subcellularLocation>
        <location evidence="1">Cell membrane</location>
        <topology evidence="1">Single-pass type II membrane protein</topology>
    </subcellularLocation>
</comment>
<comment type="alternative products">
    <event type="alternative splicing"/>
    <isoform>
        <id>Q6ZMJ2-1</id>
        <name>1</name>
        <sequence type="displayed"/>
    </isoform>
    <isoform>
        <id>Q6ZMJ2-2</id>
        <name>2</name>
        <sequence type="described" ref="VSP_023474 VSP_023475"/>
    </isoform>
    <isoform>
        <id>Q6ZMJ2-3</id>
        <name>3</name>
        <sequence type="described" ref="VSP_023472 VSP_023474 VSP_023475"/>
    </isoform>
    <isoform>
        <id>Q6ZMJ2-4</id>
        <name>4</name>
        <sequence type="described" ref="VSP_023473"/>
    </isoform>
</comment>
<comment type="similarity">
    <text evidence="1">Belongs to the SCARA5 family.</text>
</comment>